<gene>
    <name type="primary">norM</name>
    <name type="ordered locus">HD_1075</name>
</gene>
<evidence type="ECO:0000250" key="1"/>
<evidence type="ECO:0000255" key="2"/>
<evidence type="ECO:0000305" key="3"/>
<sequence>MNLQWQKYPENASKLFKLTVPIFISQLSASGMGLADIVMAGLVSDDDVSAIAVSNSIYFPLFLFVLGVLNAITPTVSYLNGANQRNLIAHQIRQGFWLVWAFVIPLIVVFLNSHWILDYMNTPAVFAQKSQDYLAIMAIGIVPALLTVNLRCMNDGLANPKPAMRITFIGLLCNIPLNYIFIFGKFGVPEMGAVGCGVATAIVNWSMFLMMFHYCYTNKPQKDIGLFNKWFEMPSGKTLLKICKLGLPIGFATFTEVMLFSTSALFLSPLGSQVVASHQTALQTSSMLFMVPLSFGIATTIVLGRVLGQKLVEEAKIISYHALITGVIFAVIAAILIVLFNNIIPLAFTRDPVSIAIASHLLLFAAVYQIPDSLQVVANGILRGYKHTKPVLYVTVFCYWGIGIPFGYVLARTDWIVQPMAAAGFWLIFCVSLSLASGLLIYQIRKIQKIPAATLIAKLERIK</sequence>
<accession>Q7VMB5</accession>
<proteinExistence type="inferred from homology"/>
<protein>
    <recommendedName>
        <fullName>Probable multidrug resistance protein NorM</fullName>
    </recommendedName>
    <alternativeName>
        <fullName>Multidrug-efflux transporter</fullName>
    </alternativeName>
</protein>
<dbReference type="EMBL" id="AE017143">
    <property type="protein sequence ID" value="AAP95942.1"/>
    <property type="molecule type" value="Genomic_DNA"/>
</dbReference>
<dbReference type="RefSeq" id="WP_010944991.1">
    <property type="nucleotide sequence ID" value="NC_002940.2"/>
</dbReference>
<dbReference type="SMR" id="Q7VMB5"/>
<dbReference type="STRING" id="233412.HD_1075"/>
<dbReference type="KEGG" id="hdu:HD_1075"/>
<dbReference type="eggNOG" id="COG0534">
    <property type="taxonomic scope" value="Bacteria"/>
</dbReference>
<dbReference type="HOGENOM" id="CLU_012893_6_0_6"/>
<dbReference type="OrthoDB" id="9780160at2"/>
<dbReference type="Proteomes" id="UP000001022">
    <property type="component" value="Chromosome"/>
</dbReference>
<dbReference type="GO" id="GO:0005886">
    <property type="term" value="C:plasma membrane"/>
    <property type="evidence" value="ECO:0007669"/>
    <property type="project" value="UniProtKB-SubCell"/>
</dbReference>
<dbReference type="GO" id="GO:0015297">
    <property type="term" value="F:antiporter activity"/>
    <property type="evidence" value="ECO:0007669"/>
    <property type="project" value="UniProtKB-KW"/>
</dbReference>
<dbReference type="GO" id="GO:0042910">
    <property type="term" value="F:xenobiotic transmembrane transporter activity"/>
    <property type="evidence" value="ECO:0007669"/>
    <property type="project" value="InterPro"/>
</dbReference>
<dbReference type="GO" id="GO:0006811">
    <property type="term" value="P:monoatomic ion transport"/>
    <property type="evidence" value="ECO:0007669"/>
    <property type="project" value="UniProtKB-KW"/>
</dbReference>
<dbReference type="CDD" id="cd13131">
    <property type="entry name" value="MATE_NorM_like"/>
    <property type="match status" value="1"/>
</dbReference>
<dbReference type="InterPro" id="IPR002528">
    <property type="entry name" value="MATE_fam"/>
</dbReference>
<dbReference type="InterPro" id="IPR050222">
    <property type="entry name" value="MATE_MdtK"/>
</dbReference>
<dbReference type="InterPro" id="IPR048279">
    <property type="entry name" value="MdtK-like"/>
</dbReference>
<dbReference type="NCBIfam" id="TIGR00797">
    <property type="entry name" value="matE"/>
    <property type="match status" value="1"/>
</dbReference>
<dbReference type="PANTHER" id="PTHR43298:SF2">
    <property type="entry name" value="FMN_FAD EXPORTER YEEO-RELATED"/>
    <property type="match status" value="1"/>
</dbReference>
<dbReference type="PANTHER" id="PTHR43298">
    <property type="entry name" value="MULTIDRUG RESISTANCE PROTEIN NORM-RELATED"/>
    <property type="match status" value="1"/>
</dbReference>
<dbReference type="Pfam" id="PF01554">
    <property type="entry name" value="MatE"/>
    <property type="match status" value="2"/>
</dbReference>
<dbReference type="PIRSF" id="PIRSF006603">
    <property type="entry name" value="DinF"/>
    <property type="match status" value="1"/>
</dbReference>
<keyword id="KW-0050">Antiport</keyword>
<keyword id="KW-0997">Cell inner membrane</keyword>
<keyword id="KW-1003">Cell membrane</keyword>
<keyword id="KW-0406">Ion transport</keyword>
<keyword id="KW-0472">Membrane</keyword>
<keyword id="KW-1185">Reference proteome</keyword>
<keyword id="KW-0812">Transmembrane</keyword>
<keyword id="KW-1133">Transmembrane helix</keyword>
<keyword id="KW-0813">Transport</keyword>
<feature type="chain" id="PRO_0000164218" description="Probable multidrug resistance protein NorM">
    <location>
        <begin position="1"/>
        <end position="463"/>
    </location>
</feature>
<feature type="transmembrane region" description="Helical" evidence="2">
    <location>
        <begin position="20"/>
        <end position="42"/>
    </location>
</feature>
<feature type="transmembrane region" description="Helical" evidence="2">
    <location>
        <begin position="57"/>
        <end position="79"/>
    </location>
</feature>
<feature type="transmembrane region" description="Helical" evidence="2">
    <location>
        <begin position="96"/>
        <end position="118"/>
    </location>
</feature>
<feature type="transmembrane region" description="Helical" evidence="2">
    <location>
        <begin position="133"/>
        <end position="150"/>
    </location>
</feature>
<feature type="transmembrane region" description="Helical" evidence="2">
    <location>
        <begin position="162"/>
        <end position="184"/>
    </location>
</feature>
<feature type="transmembrane region" description="Helical" evidence="2">
    <location>
        <begin position="194"/>
        <end position="216"/>
    </location>
</feature>
<feature type="transmembrane region" description="Helical" evidence="2">
    <location>
        <begin position="245"/>
        <end position="267"/>
    </location>
</feature>
<feature type="transmembrane region" description="Helical" evidence="2">
    <location>
        <begin position="287"/>
        <end position="306"/>
    </location>
</feature>
<feature type="transmembrane region" description="Helical" evidence="2">
    <location>
        <begin position="318"/>
        <end position="340"/>
    </location>
</feature>
<feature type="transmembrane region" description="Helical" evidence="2">
    <location>
        <begin position="355"/>
        <end position="377"/>
    </location>
</feature>
<feature type="transmembrane region" description="Helical" evidence="2">
    <location>
        <begin position="390"/>
        <end position="412"/>
    </location>
</feature>
<feature type="transmembrane region" description="Helical" evidence="2">
    <location>
        <begin position="422"/>
        <end position="444"/>
    </location>
</feature>
<organism>
    <name type="scientific">Haemophilus ducreyi (strain 35000HP / ATCC 700724)</name>
    <dbReference type="NCBI Taxonomy" id="233412"/>
    <lineage>
        <taxon>Bacteria</taxon>
        <taxon>Pseudomonadati</taxon>
        <taxon>Pseudomonadota</taxon>
        <taxon>Gammaproteobacteria</taxon>
        <taxon>Pasteurellales</taxon>
        <taxon>Pasteurellaceae</taxon>
        <taxon>Haemophilus</taxon>
    </lineage>
</organism>
<reference key="1">
    <citation type="submission" date="2003-06" db="EMBL/GenBank/DDBJ databases">
        <title>The complete genome sequence of Haemophilus ducreyi.</title>
        <authorList>
            <person name="Munson R.S. Jr."/>
            <person name="Ray W.C."/>
            <person name="Mahairas G."/>
            <person name="Sabo P."/>
            <person name="Mungur R."/>
            <person name="Johnson L."/>
            <person name="Nguyen D."/>
            <person name="Wang J."/>
            <person name="Forst C."/>
            <person name="Hood L."/>
        </authorList>
    </citation>
    <scope>NUCLEOTIDE SEQUENCE [LARGE SCALE GENOMIC DNA]</scope>
    <source>
        <strain>35000HP / ATCC 700724</strain>
    </source>
</reference>
<comment type="function">
    <text evidence="1">Multidrug efflux pump.</text>
</comment>
<comment type="subcellular location">
    <subcellularLocation>
        <location evidence="1">Cell inner membrane</location>
        <topology evidence="1">Multi-pass membrane protein</topology>
    </subcellularLocation>
</comment>
<comment type="similarity">
    <text evidence="3">Belongs to the multi antimicrobial extrusion (MATE) (TC 2.A.66.1) family.</text>
</comment>
<name>NORM_HAEDU</name>